<name>RL19_STACT</name>
<protein>
    <recommendedName>
        <fullName evidence="1">Large ribosomal subunit protein bL19</fullName>
    </recommendedName>
    <alternativeName>
        <fullName evidence="2">50S ribosomal protein L19</fullName>
    </alternativeName>
</protein>
<gene>
    <name evidence="1" type="primary">rplS</name>
    <name type="ordered locus">Sca_0866</name>
</gene>
<evidence type="ECO:0000255" key="1">
    <source>
        <dbReference type="HAMAP-Rule" id="MF_00402"/>
    </source>
</evidence>
<evidence type="ECO:0000305" key="2"/>
<feature type="chain" id="PRO_1000193888" description="Large ribosomal subunit protein bL19">
    <location>
        <begin position="1"/>
        <end position="116"/>
    </location>
</feature>
<dbReference type="EMBL" id="AM295250">
    <property type="protein sequence ID" value="CAL27776.1"/>
    <property type="molecule type" value="Genomic_DNA"/>
</dbReference>
<dbReference type="RefSeq" id="WP_015900117.1">
    <property type="nucleotide sequence ID" value="NC_012121.1"/>
</dbReference>
<dbReference type="SMR" id="B9DPI8"/>
<dbReference type="GeneID" id="93793298"/>
<dbReference type="KEGG" id="sca:SCA_0866"/>
<dbReference type="eggNOG" id="COG0335">
    <property type="taxonomic scope" value="Bacteria"/>
</dbReference>
<dbReference type="HOGENOM" id="CLU_103507_2_1_9"/>
<dbReference type="OrthoDB" id="9803541at2"/>
<dbReference type="BioCyc" id="SCAR396513:SCA_RS04375-MONOMER"/>
<dbReference type="Proteomes" id="UP000000444">
    <property type="component" value="Chromosome"/>
</dbReference>
<dbReference type="GO" id="GO:0022625">
    <property type="term" value="C:cytosolic large ribosomal subunit"/>
    <property type="evidence" value="ECO:0007669"/>
    <property type="project" value="TreeGrafter"/>
</dbReference>
<dbReference type="GO" id="GO:0003735">
    <property type="term" value="F:structural constituent of ribosome"/>
    <property type="evidence" value="ECO:0007669"/>
    <property type="project" value="InterPro"/>
</dbReference>
<dbReference type="GO" id="GO:0006412">
    <property type="term" value="P:translation"/>
    <property type="evidence" value="ECO:0007669"/>
    <property type="project" value="UniProtKB-UniRule"/>
</dbReference>
<dbReference type="FunFam" id="2.30.30.790:FF:000001">
    <property type="entry name" value="50S ribosomal protein L19"/>
    <property type="match status" value="1"/>
</dbReference>
<dbReference type="Gene3D" id="2.30.30.790">
    <property type="match status" value="1"/>
</dbReference>
<dbReference type="HAMAP" id="MF_00402">
    <property type="entry name" value="Ribosomal_bL19"/>
    <property type="match status" value="1"/>
</dbReference>
<dbReference type="InterPro" id="IPR001857">
    <property type="entry name" value="Ribosomal_bL19"/>
</dbReference>
<dbReference type="InterPro" id="IPR018257">
    <property type="entry name" value="Ribosomal_bL19_CS"/>
</dbReference>
<dbReference type="InterPro" id="IPR038657">
    <property type="entry name" value="Ribosomal_bL19_sf"/>
</dbReference>
<dbReference type="InterPro" id="IPR008991">
    <property type="entry name" value="Translation_prot_SH3-like_sf"/>
</dbReference>
<dbReference type="NCBIfam" id="TIGR01024">
    <property type="entry name" value="rplS_bact"/>
    <property type="match status" value="1"/>
</dbReference>
<dbReference type="PANTHER" id="PTHR15680:SF9">
    <property type="entry name" value="LARGE RIBOSOMAL SUBUNIT PROTEIN BL19M"/>
    <property type="match status" value="1"/>
</dbReference>
<dbReference type="PANTHER" id="PTHR15680">
    <property type="entry name" value="RIBOSOMAL PROTEIN L19"/>
    <property type="match status" value="1"/>
</dbReference>
<dbReference type="Pfam" id="PF01245">
    <property type="entry name" value="Ribosomal_L19"/>
    <property type="match status" value="1"/>
</dbReference>
<dbReference type="PIRSF" id="PIRSF002191">
    <property type="entry name" value="Ribosomal_L19"/>
    <property type="match status" value="1"/>
</dbReference>
<dbReference type="PRINTS" id="PR00061">
    <property type="entry name" value="RIBOSOMALL19"/>
</dbReference>
<dbReference type="SUPFAM" id="SSF50104">
    <property type="entry name" value="Translation proteins SH3-like domain"/>
    <property type="match status" value="1"/>
</dbReference>
<dbReference type="PROSITE" id="PS01015">
    <property type="entry name" value="RIBOSOMAL_L19"/>
    <property type="match status" value="1"/>
</dbReference>
<organism>
    <name type="scientific">Staphylococcus carnosus (strain TM300)</name>
    <dbReference type="NCBI Taxonomy" id="396513"/>
    <lineage>
        <taxon>Bacteria</taxon>
        <taxon>Bacillati</taxon>
        <taxon>Bacillota</taxon>
        <taxon>Bacilli</taxon>
        <taxon>Bacillales</taxon>
        <taxon>Staphylococcaceae</taxon>
        <taxon>Staphylococcus</taxon>
    </lineage>
</organism>
<comment type="function">
    <text evidence="1">This protein is located at the 30S-50S ribosomal subunit interface and may play a role in the structure and function of the aminoacyl-tRNA binding site.</text>
</comment>
<comment type="similarity">
    <text evidence="1">Belongs to the bacterial ribosomal protein bL19 family.</text>
</comment>
<reference key="1">
    <citation type="journal article" date="2009" name="Appl. Environ. Microbiol.">
        <title>Genome analysis of the meat starter culture bacterium Staphylococcus carnosus TM300.</title>
        <authorList>
            <person name="Rosenstein R."/>
            <person name="Nerz C."/>
            <person name="Biswas L."/>
            <person name="Resch A."/>
            <person name="Raddatz G."/>
            <person name="Schuster S.C."/>
            <person name="Goetz F."/>
        </authorList>
    </citation>
    <scope>NUCLEOTIDE SEQUENCE [LARGE SCALE GENOMIC DNA]</scope>
    <source>
        <strain>TM300</strain>
    </source>
</reference>
<keyword id="KW-1185">Reference proteome</keyword>
<keyword id="KW-0687">Ribonucleoprotein</keyword>
<keyword id="KW-0689">Ribosomal protein</keyword>
<accession>B9DPI8</accession>
<sequence length="116" mass="13356">MSNHKLIEAVTKSQLRTDLPTFRPGDTVRVHVRIVEGTRERIQVFEGVVIKRHGGGISETFTVRKISSGVGVERTFPLHTPKIEKIEVKRRGKVRRAKLYYLRNLRGKAARIKEIR</sequence>
<proteinExistence type="inferred from homology"/>